<accession>A3M3F5</accession>
<comment type="function">
    <text evidence="1">Facilitates the functional incorporation of the urease nickel metallocenter. This process requires GTP hydrolysis, probably effectuated by UreG.</text>
</comment>
<comment type="subunit">
    <text evidence="1">Homodimer. UreD, UreF and UreG form a complex that acts as a GTP-hydrolysis-dependent molecular chaperone, activating the urease apoprotein by helping to assemble the nickel containing metallocenter of UreC. The UreE protein probably delivers the nickel.</text>
</comment>
<comment type="subcellular location">
    <subcellularLocation>
        <location evidence="1">Cytoplasm</location>
    </subcellularLocation>
</comment>
<comment type="similarity">
    <text evidence="1">Belongs to the SIMIBI class G3E GTPase family. UreG subfamily.</text>
</comment>
<comment type="sequence caution" evidence="2">
    <conflict type="erroneous initiation">
        <sequence resource="EMBL-CDS" id="ABO11449"/>
    </conflict>
    <text>Truncated N-terminus.</text>
</comment>
<comment type="sequence caution" evidence="2">
    <conflict type="frameshift">
        <sequence resource="EMBL-CDS" id="ABO11449"/>
    </conflict>
</comment>
<sequence>MTERSPLRVGIGGPVGSGKTALTLNLCRALRDKYNMAVVTNDIYTKEDSNFLTRNEAMSPDRIVGVETGGCPHTAIREDASINLAAIDDLCEKFDGLELIIIESGGDNLAATFSPELSDLTLYVIDVAGGEKIPRKGGPGITKSDLLIINKTDLAPMVGANLDVMDQDAKRMRGEKPFLFSNMKTQDGLEEIIQFIEKQGLFKA</sequence>
<gene>
    <name evidence="1" type="primary">ureG</name>
    <name type="ordered locus">A1S_1017</name>
</gene>
<evidence type="ECO:0000255" key="1">
    <source>
        <dbReference type="HAMAP-Rule" id="MF_01389"/>
    </source>
</evidence>
<evidence type="ECO:0000305" key="2"/>
<name>UREG_ACIBT</name>
<feature type="chain" id="PRO_0000347341" description="Urease accessory protein UreG">
    <location>
        <begin position="1"/>
        <end position="204"/>
    </location>
</feature>
<feature type="binding site" evidence="1">
    <location>
        <begin position="13"/>
        <end position="20"/>
    </location>
    <ligand>
        <name>GTP</name>
        <dbReference type="ChEBI" id="CHEBI:37565"/>
    </ligand>
</feature>
<proteinExistence type="inferred from homology"/>
<reference key="1">
    <citation type="journal article" date="2007" name="Genes Dev.">
        <title>New insights into Acinetobacter baumannii pathogenesis revealed by high-density pyrosequencing and transposon mutagenesis.</title>
        <authorList>
            <person name="Smith M.G."/>
            <person name="Gianoulis T.A."/>
            <person name="Pukatzki S."/>
            <person name="Mekalanos J.J."/>
            <person name="Ornston L.N."/>
            <person name="Gerstein M."/>
            <person name="Snyder M."/>
        </authorList>
    </citation>
    <scope>NUCLEOTIDE SEQUENCE [LARGE SCALE GENOMIC DNA]</scope>
    <source>
        <strain>ATCC 17978 / DSM 105126 / CIP 53.77 / LMG 1025 / NCDC KC755 / 5377</strain>
    </source>
</reference>
<protein>
    <recommendedName>
        <fullName evidence="1">Urease accessory protein UreG</fullName>
    </recommendedName>
</protein>
<organism>
    <name type="scientific">Acinetobacter baumannii (strain ATCC 17978 / DSM 105126 / CIP 53.77 / LMG 1025 / NCDC KC755 / 5377)</name>
    <dbReference type="NCBI Taxonomy" id="400667"/>
    <lineage>
        <taxon>Bacteria</taxon>
        <taxon>Pseudomonadati</taxon>
        <taxon>Pseudomonadota</taxon>
        <taxon>Gammaproteobacteria</taxon>
        <taxon>Moraxellales</taxon>
        <taxon>Moraxellaceae</taxon>
        <taxon>Acinetobacter</taxon>
        <taxon>Acinetobacter calcoaceticus/baumannii complex</taxon>
    </lineage>
</organism>
<dbReference type="EMBL" id="CP000521">
    <property type="protein sequence ID" value="ABO11449.2"/>
    <property type="status" value="ALT_SEQ"/>
    <property type="molecule type" value="Genomic_DNA"/>
</dbReference>
<dbReference type="RefSeq" id="WP_000140200.1">
    <property type="nucleotide sequence ID" value="NZ_CP053098.1"/>
</dbReference>
<dbReference type="SMR" id="A3M3F5"/>
<dbReference type="GeneID" id="92892980"/>
<dbReference type="KEGG" id="acb:A1S_1017"/>
<dbReference type="HOGENOM" id="CLU_072144_1_0_6"/>
<dbReference type="GO" id="GO:0005737">
    <property type="term" value="C:cytoplasm"/>
    <property type="evidence" value="ECO:0007669"/>
    <property type="project" value="UniProtKB-SubCell"/>
</dbReference>
<dbReference type="GO" id="GO:0005525">
    <property type="term" value="F:GTP binding"/>
    <property type="evidence" value="ECO:0007669"/>
    <property type="project" value="UniProtKB-KW"/>
</dbReference>
<dbReference type="GO" id="GO:0003924">
    <property type="term" value="F:GTPase activity"/>
    <property type="evidence" value="ECO:0007669"/>
    <property type="project" value="InterPro"/>
</dbReference>
<dbReference type="GO" id="GO:0016151">
    <property type="term" value="F:nickel cation binding"/>
    <property type="evidence" value="ECO:0007669"/>
    <property type="project" value="UniProtKB-UniRule"/>
</dbReference>
<dbReference type="GO" id="GO:0043419">
    <property type="term" value="P:urea catabolic process"/>
    <property type="evidence" value="ECO:0007669"/>
    <property type="project" value="InterPro"/>
</dbReference>
<dbReference type="CDD" id="cd05540">
    <property type="entry name" value="UreG"/>
    <property type="match status" value="1"/>
</dbReference>
<dbReference type="FunFam" id="3.40.50.300:FF:000208">
    <property type="entry name" value="Urease accessory protein UreG"/>
    <property type="match status" value="1"/>
</dbReference>
<dbReference type="Gene3D" id="3.40.50.300">
    <property type="entry name" value="P-loop containing nucleotide triphosphate hydrolases"/>
    <property type="match status" value="1"/>
</dbReference>
<dbReference type="HAMAP" id="MF_01389">
    <property type="entry name" value="UreG"/>
    <property type="match status" value="1"/>
</dbReference>
<dbReference type="InterPro" id="IPR003495">
    <property type="entry name" value="CobW/HypB/UreG_nucleotide-bd"/>
</dbReference>
<dbReference type="InterPro" id="IPR027417">
    <property type="entry name" value="P-loop_NTPase"/>
</dbReference>
<dbReference type="InterPro" id="IPR004400">
    <property type="entry name" value="UreG"/>
</dbReference>
<dbReference type="NCBIfam" id="TIGR00101">
    <property type="entry name" value="ureG"/>
    <property type="match status" value="1"/>
</dbReference>
<dbReference type="PANTHER" id="PTHR31715">
    <property type="entry name" value="UREASE ACCESSORY PROTEIN G"/>
    <property type="match status" value="1"/>
</dbReference>
<dbReference type="PANTHER" id="PTHR31715:SF0">
    <property type="entry name" value="UREASE ACCESSORY PROTEIN G"/>
    <property type="match status" value="1"/>
</dbReference>
<dbReference type="Pfam" id="PF02492">
    <property type="entry name" value="cobW"/>
    <property type="match status" value="1"/>
</dbReference>
<dbReference type="PIRSF" id="PIRSF005624">
    <property type="entry name" value="Ni-bind_GTPase"/>
    <property type="match status" value="1"/>
</dbReference>
<dbReference type="SUPFAM" id="SSF52540">
    <property type="entry name" value="P-loop containing nucleoside triphosphate hydrolases"/>
    <property type="match status" value="1"/>
</dbReference>
<keyword id="KW-0143">Chaperone</keyword>
<keyword id="KW-0963">Cytoplasm</keyword>
<keyword id="KW-0342">GTP-binding</keyword>
<keyword id="KW-0996">Nickel insertion</keyword>
<keyword id="KW-0547">Nucleotide-binding</keyword>